<reference key="1">
    <citation type="journal article" date="1999" name="Nature">
        <title>Genomic sequence comparison of two unrelated isolates of the human gastric pathogen Helicobacter pylori.</title>
        <authorList>
            <person name="Alm R.A."/>
            <person name="Ling L.-S.L."/>
            <person name="Moir D.T."/>
            <person name="King B.L."/>
            <person name="Brown E.D."/>
            <person name="Doig P.C."/>
            <person name="Smith D.R."/>
            <person name="Noonan B."/>
            <person name="Guild B.C."/>
            <person name="deJonge B.L."/>
            <person name="Carmel G."/>
            <person name="Tummino P.J."/>
            <person name="Caruso A."/>
            <person name="Uria-Nickelsen M."/>
            <person name="Mills D.M."/>
            <person name="Ives C."/>
            <person name="Gibson R."/>
            <person name="Merberg D."/>
            <person name="Mills S.D."/>
            <person name="Jiang Q."/>
            <person name="Taylor D.E."/>
            <person name="Vovis G.F."/>
            <person name="Trust T.J."/>
        </authorList>
    </citation>
    <scope>NUCLEOTIDE SEQUENCE [LARGE SCALE GENOMIC DNA]</scope>
    <source>
        <strain>J99 / ATCC 700824</strain>
    </source>
</reference>
<name>KDGL_HELPJ</name>
<comment type="function">
    <text evidence="1">Catalyzes the ATP-dependent phosphorylation of sn-l,2-diacylglycerol (DAG) to phosphatidic acid. Involved in the recycling of diacylglycerol produced as a by-product during membrane-derived oligosaccharide (MDO) biosynthesis.</text>
</comment>
<comment type="catalytic activity">
    <reaction evidence="1">
        <text>a 1,2-diacyl-sn-glycerol + ATP = a 1,2-diacyl-sn-glycero-3-phosphate + ADP + H(+)</text>
        <dbReference type="Rhea" id="RHEA:10272"/>
        <dbReference type="ChEBI" id="CHEBI:15378"/>
        <dbReference type="ChEBI" id="CHEBI:17815"/>
        <dbReference type="ChEBI" id="CHEBI:30616"/>
        <dbReference type="ChEBI" id="CHEBI:58608"/>
        <dbReference type="ChEBI" id="CHEBI:456216"/>
        <dbReference type="EC" id="2.7.1.107"/>
    </reaction>
</comment>
<comment type="cofactor">
    <cofactor evidence="1">
        <name>Mg(2+)</name>
        <dbReference type="ChEBI" id="CHEBI:18420"/>
    </cofactor>
</comment>
<comment type="subcellular location">
    <subcellularLocation>
        <location evidence="1">Cell inner membrane</location>
        <topology evidence="1">Multi-pass membrane protein</topology>
    </subcellularLocation>
</comment>
<comment type="similarity">
    <text evidence="3">Belongs to the bacterial diacylglycerol kinase family.</text>
</comment>
<protein>
    <recommendedName>
        <fullName evidence="1">Diacylglycerol kinase</fullName>
        <shortName evidence="1">DAGK</shortName>
        <ecNumber evidence="1">2.7.1.107</ecNumber>
    </recommendedName>
    <alternativeName>
        <fullName evidence="1">Diglyceride kinase</fullName>
        <shortName evidence="1">DGK</shortName>
    </alternativeName>
</protein>
<sequence length="128" mass="14598">MSDFKVPPKAKGFKRLFKALFYSKDGLKCAWAEESAFRQIVILALFCIVLASYLTKDFLEWGLLILPCFLSVVIELINSSIEKAVDFTGTEFHPLAKKAKDMASSAQLIGLIFWAFIWGRYLLTLYFN</sequence>
<proteinExistence type="inferred from homology"/>
<feature type="chain" id="PRO_0000195265" description="Diacylglycerol kinase">
    <location>
        <begin position="1"/>
        <end position="128"/>
    </location>
</feature>
<feature type="transmembrane region" description="Helical" evidence="2">
    <location>
        <begin position="35"/>
        <end position="55"/>
    </location>
</feature>
<feature type="transmembrane region" description="Helical" evidence="2">
    <location>
        <begin position="58"/>
        <end position="78"/>
    </location>
</feature>
<feature type="transmembrane region" description="Helical" evidence="2">
    <location>
        <begin position="108"/>
        <end position="128"/>
    </location>
</feature>
<feature type="active site" description="Proton acceptor" evidence="1">
    <location>
        <position position="75"/>
    </location>
</feature>
<feature type="binding site" evidence="1">
    <location>
        <position position="34"/>
    </location>
    <ligand>
        <name>a divalent metal cation</name>
        <dbReference type="ChEBI" id="CHEBI:60240"/>
    </ligand>
</feature>
<feature type="binding site" evidence="1">
    <location>
        <position position="82"/>
    </location>
    <ligand>
        <name>a divalent metal cation</name>
        <dbReference type="ChEBI" id="CHEBI:60240"/>
    </ligand>
</feature>
<keyword id="KW-0067">ATP-binding</keyword>
<keyword id="KW-0997">Cell inner membrane</keyword>
<keyword id="KW-1003">Cell membrane</keyword>
<keyword id="KW-0418">Kinase</keyword>
<keyword id="KW-0444">Lipid biosynthesis</keyword>
<keyword id="KW-0443">Lipid metabolism</keyword>
<keyword id="KW-0460">Magnesium</keyword>
<keyword id="KW-0472">Membrane</keyword>
<keyword id="KW-0479">Metal-binding</keyword>
<keyword id="KW-0547">Nucleotide-binding</keyword>
<keyword id="KW-0594">Phospholipid biosynthesis</keyword>
<keyword id="KW-1208">Phospholipid metabolism</keyword>
<keyword id="KW-0808">Transferase</keyword>
<keyword id="KW-0812">Transmembrane</keyword>
<keyword id="KW-1133">Transmembrane helix</keyword>
<organism>
    <name type="scientific">Helicobacter pylori (strain J99 / ATCC 700824)</name>
    <name type="common">Campylobacter pylori J99</name>
    <dbReference type="NCBI Taxonomy" id="85963"/>
    <lineage>
        <taxon>Bacteria</taxon>
        <taxon>Pseudomonadati</taxon>
        <taxon>Campylobacterota</taxon>
        <taxon>Epsilonproteobacteria</taxon>
        <taxon>Campylobacterales</taxon>
        <taxon>Helicobacteraceae</taxon>
        <taxon>Helicobacter</taxon>
    </lineage>
</organism>
<dbReference type="EC" id="2.7.1.107" evidence="1"/>
<dbReference type="EMBL" id="AE001439">
    <property type="protein sequence ID" value="AAD06218.1"/>
    <property type="molecule type" value="Genomic_DNA"/>
</dbReference>
<dbReference type="PIR" id="D71906">
    <property type="entry name" value="D71906"/>
</dbReference>
<dbReference type="RefSeq" id="WP_001279229.1">
    <property type="nucleotide sequence ID" value="NC_000921.1"/>
</dbReference>
<dbReference type="SMR" id="Q9ZLE0"/>
<dbReference type="KEGG" id="hpj:jhp_0640"/>
<dbReference type="PATRIC" id="fig|85963.30.peg.344"/>
<dbReference type="eggNOG" id="COG0818">
    <property type="taxonomic scope" value="Bacteria"/>
</dbReference>
<dbReference type="Proteomes" id="UP000000804">
    <property type="component" value="Chromosome"/>
</dbReference>
<dbReference type="GO" id="GO:0005886">
    <property type="term" value="C:plasma membrane"/>
    <property type="evidence" value="ECO:0007669"/>
    <property type="project" value="UniProtKB-SubCell"/>
</dbReference>
<dbReference type="GO" id="GO:0005524">
    <property type="term" value="F:ATP binding"/>
    <property type="evidence" value="ECO:0007669"/>
    <property type="project" value="UniProtKB-KW"/>
</dbReference>
<dbReference type="GO" id="GO:0004143">
    <property type="term" value="F:ATP-dependent diacylglycerol kinase activity"/>
    <property type="evidence" value="ECO:0007669"/>
    <property type="project" value="UniProtKB-EC"/>
</dbReference>
<dbReference type="GO" id="GO:0046872">
    <property type="term" value="F:metal ion binding"/>
    <property type="evidence" value="ECO:0007669"/>
    <property type="project" value="UniProtKB-KW"/>
</dbReference>
<dbReference type="GO" id="GO:0006654">
    <property type="term" value="P:phosphatidic acid biosynthetic process"/>
    <property type="evidence" value="ECO:0007669"/>
    <property type="project" value="InterPro"/>
</dbReference>
<dbReference type="CDD" id="cd14264">
    <property type="entry name" value="DAGK_IM"/>
    <property type="match status" value="1"/>
</dbReference>
<dbReference type="Gene3D" id="1.10.287.3610">
    <property type="match status" value="1"/>
</dbReference>
<dbReference type="InterPro" id="IPR000829">
    <property type="entry name" value="DAGK"/>
</dbReference>
<dbReference type="InterPro" id="IPR033718">
    <property type="entry name" value="DAGK_prok"/>
</dbReference>
<dbReference type="InterPro" id="IPR036945">
    <property type="entry name" value="DAGK_sf"/>
</dbReference>
<dbReference type="PANTHER" id="PTHR34299">
    <property type="entry name" value="DIACYLGLYCEROL KINASE"/>
    <property type="match status" value="1"/>
</dbReference>
<dbReference type="PANTHER" id="PTHR34299:SF1">
    <property type="entry name" value="DIACYLGLYCEROL KINASE"/>
    <property type="match status" value="1"/>
</dbReference>
<dbReference type="Pfam" id="PF01219">
    <property type="entry name" value="DAGK_prokar"/>
    <property type="match status" value="1"/>
</dbReference>
<dbReference type="PROSITE" id="PS01069">
    <property type="entry name" value="DAGK_PROKAR"/>
    <property type="match status" value="1"/>
</dbReference>
<evidence type="ECO:0000250" key="1">
    <source>
        <dbReference type="UniProtKB" id="P0ABN1"/>
    </source>
</evidence>
<evidence type="ECO:0000255" key="2"/>
<evidence type="ECO:0000305" key="3"/>
<gene>
    <name type="primary">dgkA</name>
    <name type="ordered locus">jhp_0640</name>
</gene>
<accession>Q9ZLE0</accession>